<comment type="function">
    <text evidence="1 2">Multifunctional RNA-binding protein that recognizes the K-turn motif in ribosomal RNA, the RNA component of RNase P, box H/ACA, box C/D and box C'/D' sRNAs (By similarity). Part of ribonuclease P, a protein complex that generates mature tRNA molecules by cleaving their 5'-ends, this subunit dramatically stimulates RNase P activity.</text>
</comment>
<comment type="catalytic activity">
    <reaction>
        <text>Endonucleolytic cleavage of RNA, removing 5'-extranucleotides from tRNA precursor.</text>
        <dbReference type="EC" id="3.1.26.5"/>
    </reaction>
</comment>
<comment type="biophysicochemical properties">
    <kinetics>
        <KM evidence="2">2.6 uM for pre-tRNA-Tyr in the absence of L7Ae</KM>
        <KM evidence="2">0.044 uM for pre-tRNA-Tyr in the presence of L7Ae</KM>
        <text>kcat 10 min(-1) in absence of L7Ae, 63 min(-1) in presence of L7Ae. Kinetic parameters determined at 37 degrees Celsius.</text>
    </kinetics>
    <temperatureDependence>
        <text evidence="2">Optimum temperature is 36-38 degrees Celsius in the absence of L7Ae, 48-50 degrees Celsius in presence of L7Ae.</text>
    </temperatureDependence>
</comment>
<comment type="subunit">
    <text evidence="2">Part of the 50S ribosomal subunit. Part of the RNase P complex.</text>
</comment>
<comment type="subcellular location">
    <subcellularLocation>
        <location evidence="1 2">Cytoplasm</location>
    </subcellularLocation>
</comment>
<comment type="similarity">
    <text evidence="1">Belongs to the eukaryotic ribosomal protein eL8 family.</text>
</comment>
<gene>
    <name evidence="1" type="primary">rpl7ae</name>
    <name type="ordered locus">MMP0641</name>
</gene>
<name>RL7A_METMP</name>
<protein>
    <recommendedName>
        <fullName evidence="1">Large ribosomal subunit protein eL8</fullName>
    </recommendedName>
    <alternativeName>
        <fullName evidence="3">50S ribosomal protein L7Ae</fullName>
    </alternativeName>
    <alternativeName>
        <fullName>Ribonuclease P protein component Rpp38</fullName>
        <shortName>RNase P component Rpp38</shortName>
        <ecNumber>3.1.26.5</ecNumber>
    </alternativeName>
    <alternativeName>
        <fullName evidence="1">Ribosomal protein L8e</fullName>
    </alternativeName>
</protein>
<sequence length="117" mass="12381">MAVYVKFEISQELEEKTAEVVANAEKIKKGANEVTKAVEKGIAKLVVIAQDVQPEEIVAHIPVICDEKGIAYSYSSTKEALGKAAGLEVPTSAIAVVAEGSADELKDLVEKLNGLKA</sequence>
<dbReference type="EC" id="3.1.26.5"/>
<dbReference type="EMBL" id="BX950229">
    <property type="protein sequence ID" value="CAF30197.1"/>
    <property type="molecule type" value="Genomic_DNA"/>
</dbReference>
<dbReference type="RefSeq" id="WP_011170585.1">
    <property type="nucleotide sequence ID" value="NC_005791.1"/>
</dbReference>
<dbReference type="SMR" id="P62426"/>
<dbReference type="DIP" id="DIP-59367N"/>
<dbReference type="IntAct" id="P62426">
    <property type="interactions" value="1"/>
</dbReference>
<dbReference type="STRING" id="267377.MMP0641"/>
<dbReference type="EnsemblBacteria" id="CAF30197">
    <property type="protein sequence ID" value="CAF30197"/>
    <property type="gene ID" value="MMP0641"/>
</dbReference>
<dbReference type="GeneID" id="41279109"/>
<dbReference type="KEGG" id="mmp:MMP0641"/>
<dbReference type="PATRIC" id="fig|267377.15.peg.658"/>
<dbReference type="eggNOG" id="arCOG01751">
    <property type="taxonomic scope" value="Archaea"/>
</dbReference>
<dbReference type="HOGENOM" id="CLU_084513_4_0_2"/>
<dbReference type="OrthoDB" id="25810at2157"/>
<dbReference type="BRENDA" id="3.1.26.5">
    <property type="organism ID" value="3262"/>
</dbReference>
<dbReference type="Proteomes" id="UP000000590">
    <property type="component" value="Chromosome"/>
</dbReference>
<dbReference type="GO" id="GO:0005737">
    <property type="term" value="C:cytoplasm"/>
    <property type="evidence" value="ECO:0000314"/>
    <property type="project" value="UniProtKB"/>
</dbReference>
<dbReference type="GO" id="GO:0030677">
    <property type="term" value="C:ribonuclease P complex"/>
    <property type="evidence" value="ECO:0000314"/>
    <property type="project" value="UniProtKB"/>
</dbReference>
<dbReference type="GO" id="GO:0005840">
    <property type="term" value="C:ribosome"/>
    <property type="evidence" value="ECO:0007669"/>
    <property type="project" value="UniProtKB-KW"/>
</dbReference>
<dbReference type="GO" id="GO:0004526">
    <property type="term" value="F:ribonuclease P activity"/>
    <property type="evidence" value="ECO:0000314"/>
    <property type="project" value="UniProtKB"/>
</dbReference>
<dbReference type="GO" id="GO:0019843">
    <property type="term" value="F:rRNA binding"/>
    <property type="evidence" value="ECO:0007669"/>
    <property type="project" value="UniProtKB-KW"/>
</dbReference>
<dbReference type="GO" id="GO:0003735">
    <property type="term" value="F:structural constituent of ribosome"/>
    <property type="evidence" value="ECO:0007669"/>
    <property type="project" value="InterPro"/>
</dbReference>
<dbReference type="GO" id="GO:0006412">
    <property type="term" value="P:translation"/>
    <property type="evidence" value="ECO:0007669"/>
    <property type="project" value="UniProtKB-UniRule"/>
</dbReference>
<dbReference type="GO" id="GO:0001682">
    <property type="term" value="P:tRNA 5'-leader removal"/>
    <property type="evidence" value="ECO:0000314"/>
    <property type="project" value="UniProtKB"/>
</dbReference>
<dbReference type="FunFam" id="3.30.1330.30:FF:000020">
    <property type="entry name" value="50S ribosomal protein L7Ae"/>
    <property type="match status" value="1"/>
</dbReference>
<dbReference type="Gene3D" id="3.30.1330.30">
    <property type="match status" value="1"/>
</dbReference>
<dbReference type="HAMAP" id="MF_00326">
    <property type="entry name" value="Ribosomal_eL8"/>
    <property type="match status" value="1"/>
</dbReference>
<dbReference type="InterPro" id="IPR050257">
    <property type="entry name" value="eL8/uL1-like"/>
</dbReference>
<dbReference type="InterPro" id="IPR029064">
    <property type="entry name" value="Ribosomal_eL30-like_sf"/>
</dbReference>
<dbReference type="InterPro" id="IPR004038">
    <property type="entry name" value="Ribosomal_eL8/eL30/eS12/Gad45"/>
</dbReference>
<dbReference type="InterPro" id="IPR018492">
    <property type="entry name" value="Ribosomal_eL8/Nhp2"/>
</dbReference>
<dbReference type="InterPro" id="IPR022481">
    <property type="entry name" value="Ribosomal_eL8_arc"/>
</dbReference>
<dbReference type="NCBIfam" id="TIGR03677">
    <property type="entry name" value="eL8_ribo"/>
    <property type="match status" value="1"/>
</dbReference>
<dbReference type="PANTHER" id="PTHR23105">
    <property type="entry name" value="RIBOSOMAL PROTEIN L7AE FAMILY MEMBER"/>
    <property type="match status" value="1"/>
</dbReference>
<dbReference type="Pfam" id="PF01248">
    <property type="entry name" value="Ribosomal_L7Ae"/>
    <property type="match status" value="1"/>
</dbReference>
<dbReference type="PRINTS" id="PR00881">
    <property type="entry name" value="L7ARS6FAMILY"/>
</dbReference>
<dbReference type="PRINTS" id="PR00884">
    <property type="entry name" value="RIBOSOMALHS6"/>
</dbReference>
<dbReference type="SUPFAM" id="SSF55315">
    <property type="entry name" value="L30e-like"/>
    <property type="match status" value="1"/>
</dbReference>
<reference key="1">
    <citation type="journal article" date="2004" name="J. Bacteriol.">
        <title>Complete genome sequence of the genetically tractable hydrogenotrophic methanogen Methanococcus maripaludis.</title>
        <authorList>
            <person name="Hendrickson E.L."/>
            <person name="Kaul R."/>
            <person name="Zhou Y."/>
            <person name="Bovee D."/>
            <person name="Chapman P."/>
            <person name="Chung J."/>
            <person name="Conway de Macario E."/>
            <person name="Dodsworth J.A."/>
            <person name="Gillett W."/>
            <person name="Graham D.E."/>
            <person name="Hackett M."/>
            <person name="Haydock A.K."/>
            <person name="Kang A."/>
            <person name="Land M.L."/>
            <person name="Levy R."/>
            <person name="Lie T.J."/>
            <person name="Major T.A."/>
            <person name="Moore B.C."/>
            <person name="Porat I."/>
            <person name="Palmeiri A."/>
            <person name="Rouse G."/>
            <person name="Saenphimmachak C."/>
            <person name="Soell D."/>
            <person name="Van Dien S."/>
            <person name="Wang T."/>
            <person name="Whitman W.B."/>
            <person name="Xia Q."/>
            <person name="Zhang Y."/>
            <person name="Larimer F.W."/>
            <person name="Olson M.V."/>
            <person name="Leigh J.A."/>
        </authorList>
    </citation>
    <scope>NUCLEOTIDE SEQUENCE [LARGE SCALE GENOMIC DNA]</scope>
    <source>
        <strain>DSM 14266 / JCM 13030 / NBRC 101832 / S2 / LL</strain>
    </source>
</reference>
<reference key="2">
    <citation type="journal article" date="2010" name="Proc. Natl. Acad. Sci. U.S.A.">
        <title>Ribosomal protein L7Ae is a subunit of archaeal RNase P.</title>
        <authorList>
            <person name="Cho I.M."/>
            <person name="Lai L.B."/>
            <person name="Susanti D."/>
            <person name="Mukhopadhyay B."/>
            <person name="Gopalan V."/>
        </authorList>
    </citation>
    <scope>FUNCTION IN RNASE P</scope>
    <scope>BIOPHYSICOCHEMICAL PROPERTIES</scope>
    <scope>SUBUNIT</scope>
    <scope>SUBCELLULAR LOCATION</scope>
    <scope>MUTAGENESIS OF 32-ASN--LYS-36</scope>
    <source>
        <strain>DSM 14266 / JCM 13030 / NBRC 101832 / S2 / LL</strain>
    </source>
</reference>
<evidence type="ECO:0000255" key="1">
    <source>
        <dbReference type="HAMAP-Rule" id="MF_00326"/>
    </source>
</evidence>
<evidence type="ECO:0000269" key="2">
    <source>
    </source>
</evidence>
<evidence type="ECO:0000305" key="3"/>
<proteinExistence type="evidence at protein level"/>
<feature type="chain" id="PRO_0000136796" description="Large ribosomal subunit protein eL8">
    <location>
        <begin position="1"/>
        <end position="117"/>
    </location>
</feature>
<feature type="mutagenesis site" description="4% of activity in reconstituting RNase P." evidence="2">
    <original>NEVTK</original>
    <variation>AAVTA</variation>
    <location>
        <begin position="32"/>
        <end position="36"/>
    </location>
</feature>
<keyword id="KW-0963">Cytoplasm</keyword>
<keyword id="KW-0255">Endonuclease</keyword>
<keyword id="KW-0378">Hydrolase</keyword>
<keyword id="KW-0540">Nuclease</keyword>
<keyword id="KW-1185">Reference proteome</keyword>
<keyword id="KW-0687">Ribonucleoprotein</keyword>
<keyword id="KW-0689">Ribosomal protein</keyword>
<keyword id="KW-0694">RNA-binding</keyword>
<keyword id="KW-0699">rRNA-binding</keyword>
<keyword id="KW-0819">tRNA processing</keyword>
<organism>
    <name type="scientific">Methanococcus maripaludis (strain DSM 14266 / JCM 13030 / NBRC 101832 / S2 / LL)</name>
    <dbReference type="NCBI Taxonomy" id="267377"/>
    <lineage>
        <taxon>Archaea</taxon>
        <taxon>Methanobacteriati</taxon>
        <taxon>Methanobacteriota</taxon>
        <taxon>Methanomada group</taxon>
        <taxon>Methanococci</taxon>
        <taxon>Methanococcales</taxon>
        <taxon>Methanococcaceae</taxon>
        <taxon>Methanococcus</taxon>
    </lineage>
</organism>
<accession>P62426</accession>